<evidence type="ECO:0000305" key="1"/>
<reference key="1">
    <citation type="journal article" date="2002" name="Nature">
        <title>Comparison of the genomes of two Xanthomonas pathogens with differing host specificities.</title>
        <authorList>
            <person name="da Silva A.C.R."/>
            <person name="Ferro J.A."/>
            <person name="Reinach F.C."/>
            <person name="Farah C.S."/>
            <person name="Furlan L.R."/>
            <person name="Quaggio R.B."/>
            <person name="Monteiro-Vitorello C.B."/>
            <person name="Van Sluys M.A."/>
            <person name="Almeida N.F. Jr."/>
            <person name="Alves L.M.C."/>
            <person name="do Amaral A.M."/>
            <person name="Bertolini M.C."/>
            <person name="Camargo L.E.A."/>
            <person name="Camarotte G."/>
            <person name="Cannavan F."/>
            <person name="Cardozo J."/>
            <person name="Chambergo F."/>
            <person name="Ciapina L.P."/>
            <person name="Cicarelli R.M.B."/>
            <person name="Coutinho L.L."/>
            <person name="Cursino-Santos J.R."/>
            <person name="El-Dorry H."/>
            <person name="Faria J.B."/>
            <person name="Ferreira A.J.S."/>
            <person name="Ferreira R.C.C."/>
            <person name="Ferro M.I.T."/>
            <person name="Formighieri E.F."/>
            <person name="Franco M.C."/>
            <person name="Greggio C.C."/>
            <person name="Gruber A."/>
            <person name="Katsuyama A.M."/>
            <person name="Kishi L.T."/>
            <person name="Leite R.P."/>
            <person name="Lemos E.G.M."/>
            <person name="Lemos M.V.F."/>
            <person name="Locali E.C."/>
            <person name="Machado M.A."/>
            <person name="Madeira A.M.B.N."/>
            <person name="Martinez-Rossi N.M."/>
            <person name="Martins E.C."/>
            <person name="Meidanis J."/>
            <person name="Menck C.F.M."/>
            <person name="Miyaki C.Y."/>
            <person name="Moon D.H."/>
            <person name="Moreira L.M."/>
            <person name="Novo M.T.M."/>
            <person name="Okura V.K."/>
            <person name="Oliveira M.C."/>
            <person name="Oliveira V.R."/>
            <person name="Pereira H.A."/>
            <person name="Rossi A."/>
            <person name="Sena J.A.D."/>
            <person name="Silva C."/>
            <person name="de Souza R.F."/>
            <person name="Spinola L.A.F."/>
            <person name="Takita M.A."/>
            <person name="Tamura R.E."/>
            <person name="Teixeira E.C."/>
            <person name="Tezza R.I.D."/>
            <person name="Trindade dos Santos M."/>
            <person name="Truffi D."/>
            <person name="Tsai S.M."/>
            <person name="White F.F."/>
            <person name="Setubal J.C."/>
            <person name="Kitajima J.P."/>
        </authorList>
    </citation>
    <scope>NUCLEOTIDE SEQUENCE [LARGE SCALE GENOMIC DNA]</scope>
    <source>
        <strain>306</strain>
    </source>
</reference>
<protein>
    <recommendedName>
        <fullName>UPF0337 protein XAC0100</fullName>
    </recommendedName>
</protein>
<gene>
    <name type="ordered locus">XAC0100</name>
</gene>
<accession>Q8PR66</accession>
<organism>
    <name type="scientific">Xanthomonas axonopodis pv. citri (strain 306)</name>
    <dbReference type="NCBI Taxonomy" id="190486"/>
    <lineage>
        <taxon>Bacteria</taxon>
        <taxon>Pseudomonadati</taxon>
        <taxon>Pseudomonadota</taxon>
        <taxon>Gammaproteobacteria</taxon>
        <taxon>Lysobacterales</taxon>
        <taxon>Lysobacteraceae</taxon>
        <taxon>Xanthomonas</taxon>
    </lineage>
</organism>
<name>Y100_XANAC</name>
<comment type="similarity">
    <text evidence="1">Belongs to the UPF0337 (CsbD) family.</text>
</comment>
<dbReference type="EMBL" id="AE008923">
    <property type="protein sequence ID" value="AAM34992.1"/>
    <property type="molecule type" value="Genomic_DNA"/>
</dbReference>
<dbReference type="RefSeq" id="WP_011050089.1">
    <property type="nucleotide sequence ID" value="NC_003919.1"/>
</dbReference>
<dbReference type="SMR" id="Q8PR66"/>
<dbReference type="KEGG" id="xac:XAC0100"/>
<dbReference type="eggNOG" id="COG3237">
    <property type="taxonomic scope" value="Bacteria"/>
</dbReference>
<dbReference type="HOGENOM" id="CLU_135567_3_3_6"/>
<dbReference type="Proteomes" id="UP000000576">
    <property type="component" value="Chromosome"/>
</dbReference>
<dbReference type="Gene3D" id="1.10.1470.10">
    <property type="entry name" value="YjbJ"/>
    <property type="match status" value="1"/>
</dbReference>
<dbReference type="InterPro" id="IPR008462">
    <property type="entry name" value="CsbD"/>
</dbReference>
<dbReference type="InterPro" id="IPR050423">
    <property type="entry name" value="UPF0337_stress_rsp"/>
</dbReference>
<dbReference type="InterPro" id="IPR036629">
    <property type="entry name" value="YjbJ_sf"/>
</dbReference>
<dbReference type="PANTHER" id="PTHR34977">
    <property type="entry name" value="UPF0337 PROTEIN YJBJ"/>
    <property type="match status" value="1"/>
</dbReference>
<dbReference type="PANTHER" id="PTHR34977:SF1">
    <property type="entry name" value="UPF0337 PROTEIN YJBJ"/>
    <property type="match status" value="1"/>
</dbReference>
<dbReference type="Pfam" id="PF05532">
    <property type="entry name" value="CsbD"/>
    <property type="match status" value="1"/>
</dbReference>
<dbReference type="SUPFAM" id="SSF69047">
    <property type="entry name" value="Hypothetical protein YjbJ"/>
    <property type="match status" value="1"/>
</dbReference>
<proteinExistence type="inferred from homology"/>
<sequence length="62" mass="6541">MDKNRIDGAAKQVKGSVKEAIGRVTGDKSTELEGAAEKNVGKVQRKAGEVADDVRDAVKSTK</sequence>
<feature type="chain" id="PRO_0000210059" description="UPF0337 protein XAC0100">
    <location>
        <begin position="1"/>
        <end position="62"/>
    </location>
</feature>